<evidence type="ECO:0000250" key="1">
    <source>
        <dbReference type="UniProtKB" id="P22139"/>
    </source>
</evidence>
<evidence type="ECO:0000250" key="2">
    <source>
        <dbReference type="UniProtKB" id="P42488"/>
    </source>
</evidence>
<evidence type="ECO:0000305" key="3"/>
<organismHost>
    <name type="scientific">Ornithodoros</name>
    <name type="common">relapsing fever ticks</name>
    <dbReference type="NCBI Taxonomy" id="6937"/>
</organismHost>
<organismHost>
    <name type="scientific">Phacochoerus aethiopicus</name>
    <name type="common">Warthog</name>
    <dbReference type="NCBI Taxonomy" id="85517"/>
</organismHost>
<organismHost>
    <name type="scientific">Phacochoerus africanus</name>
    <name type="common">Warthog</name>
    <dbReference type="NCBI Taxonomy" id="41426"/>
</organismHost>
<organismHost>
    <name type="scientific">Potamochoerus larvatus</name>
    <name type="common">Bushpig</name>
    <dbReference type="NCBI Taxonomy" id="273792"/>
</organismHost>
<organismHost>
    <name type="scientific">Sus scrofa</name>
    <name type="common">Pig</name>
    <dbReference type="NCBI Taxonomy" id="9823"/>
</organismHost>
<name>RPB10_ASFM2</name>
<dbReference type="EMBL" id="AY261361">
    <property type="status" value="NOT_ANNOTATED_CDS"/>
    <property type="molecule type" value="Genomic_DNA"/>
</dbReference>
<dbReference type="SMR" id="P0C980"/>
<dbReference type="Proteomes" id="UP000000860">
    <property type="component" value="Segment"/>
</dbReference>
<dbReference type="GO" id="GO:0000428">
    <property type="term" value="C:DNA-directed RNA polymerase complex"/>
    <property type="evidence" value="ECO:0007669"/>
    <property type="project" value="UniProtKB-KW"/>
</dbReference>
<dbReference type="GO" id="GO:0030430">
    <property type="term" value="C:host cell cytoplasm"/>
    <property type="evidence" value="ECO:0007669"/>
    <property type="project" value="UniProtKB-SubCell"/>
</dbReference>
<dbReference type="GO" id="GO:0003677">
    <property type="term" value="F:DNA binding"/>
    <property type="evidence" value="ECO:0007669"/>
    <property type="project" value="InterPro"/>
</dbReference>
<dbReference type="GO" id="GO:0003899">
    <property type="term" value="F:DNA-directed RNA polymerase activity"/>
    <property type="evidence" value="ECO:0007669"/>
    <property type="project" value="InterPro"/>
</dbReference>
<dbReference type="GO" id="GO:0008270">
    <property type="term" value="F:zinc ion binding"/>
    <property type="evidence" value="ECO:0007669"/>
    <property type="project" value="InterPro"/>
</dbReference>
<dbReference type="GO" id="GO:0006351">
    <property type="term" value="P:DNA-templated transcription"/>
    <property type="evidence" value="ECO:0007669"/>
    <property type="project" value="InterPro"/>
</dbReference>
<dbReference type="GO" id="GO:0019083">
    <property type="term" value="P:viral transcription"/>
    <property type="evidence" value="ECO:0007669"/>
    <property type="project" value="UniProtKB-KW"/>
</dbReference>
<dbReference type="Gene3D" id="1.10.10.60">
    <property type="entry name" value="Homeodomain-like"/>
    <property type="match status" value="1"/>
</dbReference>
<dbReference type="InterPro" id="IPR023580">
    <property type="entry name" value="RNA_pol_su_RPB10"/>
</dbReference>
<dbReference type="InterPro" id="IPR020789">
    <property type="entry name" value="RNA_pol_suN_Zn-BS"/>
</dbReference>
<dbReference type="InterPro" id="IPR000268">
    <property type="entry name" value="RPABC5/Rpb10"/>
</dbReference>
<dbReference type="Pfam" id="PF01194">
    <property type="entry name" value="RNA_pol_N"/>
    <property type="match status" value="1"/>
</dbReference>
<dbReference type="SUPFAM" id="SSF46924">
    <property type="entry name" value="RNA polymerase subunit RPB10"/>
    <property type="match status" value="1"/>
</dbReference>
<dbReference type="PROSITE" id="PS01112">
    <property type="entry name" value="RNA_POL_N_8KD"/>
    <property type="match status" value="1"/>
</dbReference>
<protein>
    <recommendedName>
        <fullName evidence="2">DNA-directed RNA polymerase RPB10 homolog</fullName>
        <shortName evidence="3">RPB10 homolog</shortName>
    </recommendedName>
</protein>
<organism>
    <name type="scientific">African swine fever virus (isolate Tick/Malawi/Lil 20-1/1983)</name>
    <name type="common">ASFV</name>
    <dbReference type="NCBI Taxonomy" id="10500"/>
    <lineage>
        <taxon>Viruses</taxon>
        <taxon>Varidnaviria</taxon>
        <taxon>Bamfordvirae</taxon>
        <taxon>Nucleocytoviricota</taxon>
        <taxon>Pokkesviricetes</taxon>
        <taxon>Asfuvirales</taxon>
        <taxon>Asfarviridae</taxon>
        <taxon>Asfivirus</taxon>
        <taxon>African swine fever virus</taxon>
    </lineage>
</organism>
<reference key="1">
    <citation type="submission" date="2003-03" db="EMBL/GenBank/DDBJ databases">
        <title>African swine fever virus genomes.</title>
        <authorList>
            <person name="Kutish G.F."/>
            <person name="Rock D.L."/>
        </authorList>
    </citation>
    <scope>NUCLEOTIDE SEQUENCE [LARGE SCALE GENOMIC DNA]</scope>
</reference>
<comment type="function">
    <text evidence="1">Component of the DNA-directed RNA polymerase (RNAP) that catalyzes the transcription in the cytoplasm of viral DNA into RNA using the four ribonucleoside triphosphates as substrates.</text>
</comment>
<comment type="subunit">
    <text evidence="2">Part of the viral DNA-directed RNA polymerase that consists of 8 polII-like subunits (RPB1, RPB2, RPB3, RPB5, RPB6, RPB7, RPB9, RPB10), a capping enzyme and a termination factor.</text>
</comment>
<comment type="subcellular location">
    <subcellularLocation>
        <location evidence="3">Host cytoplasm</location>
    </subcellularLocation>
</comment>
<comment type="similarity">
    <text evidence="3">Belongs to the archaeal RpoN/eukaryotic RPB10 RNA polymerase subunit family.</text>
</comment>
<proteinExistence type="inferred from homology"/>
<keyword id="KW-0240">DNA-directed RNA polymerase</keyword>
<keyword id="KW-1035">Host cytoplasm</keyword>
<keyword id="KW-0479">Metal-binding</keyword>
<keyword id="KW-0804">Transcription</keyword>
<keyword id="KW-1195">Viral transcription</keyword>
<keyword id="KW-0862">Zinc</keyword>
<gene>
    <name type="ordered locus">Mal-103</name>
</gene>
<accession>P0C980</accession>
<feature type="chain" id="PRO_0000373079" description="DNA-directed RNA polymerase RPB10 homolog">
    <location>
        <begin position="1"/>
        <end position="80"/>
    </location>
</feature>
<feature type="binding site" evidence="1">
    <location>
        <position position="7"/>
    </location>
    <ligand>
        <name>Zn(2+)</name>
        <dbReference type="ChEBI" id="CHEBI:29105"/>
    </ligand>
</feature>
<feature type="binding site" evidence="1">
    <location>
        <position position="10"/>
    </location>
    <ligand>
        <name>Zn(2+)</name>
        <dbReference type="ChEBI" id="CHEBI:29105"/>
    </ligand>
</feature>
<feature type="binding site" evidence="1">
    <location>
        <position position="65"/>
    </location>
    <ligand>
        <name>Zn(2+)</name>
        <dbReference type="ChEBI" id="CHEBI:29105"/>
    </ligand>
</feature>
<feature type="binding site" evidence="1">
    <location>
        <position position="66"/>
    </location>
    <ligand>
        <name>Zn(2+)</name>
        <dbReference type="ChEBI" id="CHEBI:29105"/>
    </ligand>
</feature>
<sequence>MLIPVVCFTCGFPIGTYAAIFDKARTEYIKTKMGGTLPQNIPLDASLQIELKDLITALGIPMRVCCRTHLITTLDYRKYY</sequence>